<evidence type="ECO:0000255" key="1"/>
<evidence type="ECO:0000255" key="2">
    <source>
        <dbReference type="PROSITE-ProRule" id="PRU10054"/>
    </source>
</evidence>
<evidence type="ECO:0000305" key="3"/>
<gene>
    <name type="primary">alfA</name>
    <name type="ORF">DDB_G0274391</name>
</gene>
<comment type="function">
    <text>Alpha-L-fucosidase is responsible for hydrolyzing the alpha-1,6-linked fucose joined to the reducing-end N-acetylglucosamine of the carbohydrate moieties of glycoproteins.</text>
</comment>
<comment type="catalytic activity">
    <reaction evidence="2">
        <text>an alpha-L-fucoside + H2O = L-fucose + an alcohol</text>
        <dbReference type="Rhea" id="RHEA:12288"/>
        <dbReference type="ChEBI" id="CHEBI:2181"/>
        <dbReference type="ChEBI" id="CHEBI:15377"/>
        <dbReference type="ChEBI" id="CHEBI:28349"/>
        <dbReference type="ChEBI" id="CHEBI:30879"/>
        <dbReference type="EC" id="3.2.1.51"/>
    </reaction>
</comment>
<comment type="miscellaneous">
    <text>The maximum expression of alpha-L-fucosidase occurs during aggregation stage of dictyostelium discoideum.</text>
</comment>
<comment type="similarity">
    <text evidence="3">Belongs to the glycosyl hydrolase 29 family.</text>
</comment>
<keyword id="KW-0326">Glycosidase</keyword>
<keyword id="KW-0378">Hydrolase</keyword>
<keyword id="KW-1185">Reference proteome</keyword>
<keyword id="KW-0732">Signal</keyword>
<reference key="1">
    <citation type="journal article" date="1989" name="FEBS Lett.">
        <title>A developmentally regulated gene product from Dictyostelium discoideum shows high homology to human alpha-L-fucosidase.</title>
        <authorList>
            <person name="Mueller-Taubenberger A."/>
            <person name="Westphal M."/>
            <person name="Noegel A."/>
            <person name="Gerisch G."/>
        </authorList>
    </citation>
    <scope>NUCLEOTIDE SEQUENCE [GENOMIC DNA]</scope>
    <source>
        <strain>AX2</strain>
        <strain>AX3</strain>
    </source>
</reference>
<reference key="2">
    <citation type="journal article" date="2002" name="Nature">
        <title>Sequence and analysis of chromosome 2 of Dictyostelium discoideum.</title>
        <authorList>
            <person name="Gloeckner G."/>
            <person name="Eichinger L."/>
            <person name="Szafranski K."/>
            <person name="Pachebat J.A."/>
            <person name="Bankier A.T."/>
            <person name="Dear P.H."/>
            <person name="Lehmann R."/>
            <person name="Baumgart C."/>
            <person name="Parra G."/>
            <person name="Abril J.F."/>
            <person name="Guigo R."/>
            <person name="Kumpf K."/>
            <person name="Tunggal B."/>
            <person name="Cox E.C."/>
            <person name="Quail M.A."/>
            <person name="Platzer M."/>
            <person name="Rosenthal A."/>
            <person name="Noegel A.A."/>
        </authorList>
    </citation>
    <scope>NUCLEOTIDE SEQUENCE [LARGE SCALE GENOMIC DNA]</scope>
    <source>
        <strain>AX4</strain>
    </source>
</reference>
<reference key="3">
    <citation type="journal article" date="2005" name="Nature">
        <title>The genome of the social amoeba Dictyostelium discoideum.</title>
        <authorList>
            <person name="Eichinger L."/>
            <person name="Pachebat J.A."/>
            <person name="Gloeckner G."/>
            <person name="Rajandream M.A."/>
            <person name="Sucgang R."/>
            <person name="Berriman M."/>
            <person name="Song J."/>
            <person name="Olsen R."/>
            <person name="Szafranski K."/>
            <person name="Xu Q."/>
            <person name="Tunggal B."/>
            <person name="Kummerfeld S."/>
            <person name="Madera M."/>
            <person name="Konfortov B.A."/>
            <person name="Rivero F."/>
            <person name="Bankier A.T."/>
            <person name="Lehmann R."/>
            <person name="Hamlin N."/>
            <person name="Davies R."/>
            <person name="Gaudet P."/>
            <person name="Fey P."/>
            <person name="Pilcher K."/>
            <person name="Chen G."/>
            <person name="Saunders D."/>
            <person name="Sodergren E.J."/>
            <person name="Davis P."/>
            <person name="Kerhornou A."/>
            <person name="Nie X."/>
            <person name="Hall N."/>
            <person name="Anjard C."/>
            <person name="Hemphill L."/>
            <person name="Bason N."/>
            <person name="Farbrother P."/>
            <person name="Desany B."/>
            <person name="Just E."/>
            <person name="Morio T."/>
            <person name="Rost R."/>
            <person name="Churcher C.M."/>
            <person name="Cooper J."/>
            <person name="Haydock S."/>
            <person name="van Driessche N."/>
            <person name="Cronin A."/>
            <person name="Goodhead I."/>
            <person name="Muzny D.M."/>
            <person name="Mourier T."/>
            <person name="Pain A."/>
            <person name="Lu M."/>
            <person name="Harper D."/>
            <person name="Lindsay R."/>
            <person name="Hauser H."/>
            <person name="James K.D."/>
            <person name="Quiles M."/>
            <person name="Madan Babu M."/>
            <person name="Saito T."/>
            <person name="Buchrieser C."/>
            <person name="Wardroper A."/>
            <person name="Felder M."/>
            <person name="Thangavelu M."/>
            <person name="Johnson D."/>
            <person name="Knights A."/>
            <person name="Loulseged H."/>
            <person name="Mungall K.L."/>
            <person name="Oliver K."/>
            <person name="Price C."/>
            <person name="Quail M.A."/>
            <person name="Urushihara H."/>
            <person name="Hernandez J."/>
            <person name="Rabbinowitsch E."/>
            <person name="Steffen D."/>
            <person name="Sanders M."/>
            <person name="Ma J."/>
            <person name="Kohara Y."/>
            <person name="Sharp S."/>
            <person name="Simmonds M.N."/>
            <person name="Spiegler S."/>
            <person name="Tivey A."/>
            <person name="Sugano S."/>
            <person name="White B."/>
            <person name="Walker D."/>
            <person name="Woodward J.R."/>
            <person name="Winckler T."/>
            <person name="Tanaka Y."/>
            <person name="Shaulsky G."/>
            <person name="Schleicher M."/>
            <person name="Weinstock G.M."/>
            <person name="Rosenthal A."/>
            <person name="Cox E.C."/>
            <person name="Chisholm R.L."/>
            <person name="Gibbs R.A."/>
            <person name="Loomis W.F."/>
            <person name="Platzer M."/>
            <person name="Kay R.R."/>
            <person name="Williams J.G."/>
            <person name="Dear P.H."/>
            <person name="Noegel A.A."/>
            <person name="Barrell B.G."/>
            <person name="Kuspa A."/>
        </authorList>
    </citation>
    <scope>NUCLEOTIDE SEQUENCE [LARGE SCALE GENOMIC DNA]</scope>
    <source>
        <strain>AX4</strain>
    </source>
</reference>
<proteinExistence type="inferred from homology"/>
<accession>P10901</accession>
<accession>Q554R0</accession>
<dbReference type="EC" id="3.2.1.51"/>
<dbReference type="EMBL" id="Y07497">
    <property type="protein sequence ID" value="CAA68800.1"/>
    <property type="molecule type" value="Genomic_DNA"/>
</dbReference>
<dbReference type="EMBL" id="AAFI02000012">
    <property type="protein sequence ID" value="EAL70088.1"/>
    <property type="molecule type" value="Genomic_DNA"/>
</dbReference>
<dbReference type="PIR" id="A30364">
    <property type="entry name" value="A30364"/>
</dbReference>
<dbReference type="RefSeq" id="XP_644263.1">
    <property type="nucleotide sequence ID" value="XM_639171.1"/>
</dbReference>
<dbReference type="SMR" id="P10901"/>
<dbReference type="FunCoup" id="P10901">
    <property type="interactions" value="13"/>
</dbReference>
<dbReference type="STRING" id="44689.P10901"/>
<dbReference type="CAZy" id="GH29">
    <property type="family name" value="Glycoside Hydrolase Family 29"/>
</dbReference>
<dbReference type="PaxDb" id="44689-DDB0185016"/>
<dbReference type="EnsemblProtists" id="EAL70088">
    <property type="protein sequence ID" value="EAL70088"/>
    <property type="gene ID" value="DDB_G0274391"/>
</dbReference>
<dbReference type="GeneID" id="8619691"/>
<dbReference type="KEGG" id="ddi:DDB_G0274391"/>
<dbReference type="dictyBase" id="DDB_G0274391">
    <property type="gene designation" value="alfA"/>
</dbReference>
<dbReference type="VEuPathDB" id="AmoebaDB:DDB_G0274391"/>
<dbReference type="eggNOG" id="KOG3340">
    <property type="taxonomic scope" value="Eukaryota"/>
</dbReference>
<dbReference type="HOGENOM" id="CLU_002934_1_1_1"/>
<dbReference type="InParanoid" id="P10901"/>
<dbReference type="OMA" id="LPEHKWE"/>
<dbReference type="PhylomeDB" id="P10901"/>
<dbReference type="BRENDA" id="3.2.1.51">
    <property type="organism ID" value="1939"/>
</dbReference>
<dbReference type="Reactome" id="R-DDI-6798695">
    <property type="pathway name" value="Neutrophil degranulation"/>
</dbReference>
<dbReference type="Reactome" id="R-DDI-975578">
    <property type="pathway name" value="Reactions specific to the complex N-glycan synthesis pathway"/>
</dbReference>
<dbReference type="PRO" id="PR:P10901"/>
<dbReference type="Proteomes" id="UP000002195">
    <property type="component" value="Chromosome 2"/>
</dbReference>
<dbReference type="GO" id="GO:0005576">
    <property type="term" value="C:extracellular region"/>
    <property type="evidence" value="ECO:0000314"/>
    <property type="project" value="dictyBase"/>
</dbReference>
<dbReference type="GO" id="GO:0005764">
    <property type="term" value="C:lysosome"/>
    <property type="evidence" value="ECO:0000314"/>
    <property type="project" value="dictyBase"/>
</dbReference>
<dbReference type="GO" id="GO:0033938">
    <property type="term" value="F:1,6-alpha-L-fucosidase activity"/>
    <property type="evidence" value="ECO:0000314"/>
    <property type="project" value="dictyBase"/>
</dbReference>
<dbReference type="GO" id="GO:0004560">
    <property type="term" value="F:alpha-L-fucosidase activity"/>
    <property type="evidence" value="ECO:0000314"/>
    <property type="project" value="dictyBase"/>
</dbReference>
<dbReference type="GO" id="GO:0006004">
    <property type="term" value="P:fucose metabolic process"/>
    <property type="evidence" value="ECO:0000314"/>
    <property type="project" value="dictyBase"/>
</dbReference>
<dbReference type="GO" id="GO:0016139">
    <property type="term" value="P:glycoside catabolic process"/>
    <property type="evidence" value="ECO:0000318"/>
    <property type="project" value="GO_Central"/>
</dbReference>
<dbReference type="GO" id="GO:0051591">
    <property type="term" value="P:response to cAMP"/>
    <property type="evidence" value="ECO:0000314"/>
    <property type="project" value="dictyBase"/>
</dbReference>
<dbReference type="FunFam" id="2.60.40.1180:FF:000051">
    <property type="entry name" value="Alpha-L-fucosidase"/>
    <property type="match status" value="1"/>
</dbReference>
<dbReference type="FunFam" id="3.20.20.80:FF:000201">
    <property type="entry name" value="Alpha-L-fucosidase"/>
    <property type="match status" value="1"/>
</dbReference>
<dbReference type="Gene3D" id="3.20.20.80">
    <property type="entry name" value="Glycosidases"/>
    <property type="match status" value="1"/>
</dbReference>
<dbReference type="Gene3D" id="2.60.40.1180">
    <property type="entry name" value="Golgi alpha-mannosidase II"/>
    <property type="match status" value="1"/>
</dbReference>
<dbReference type="InterPro" id="IPR016286">
    <property type="entry name" value="FUC_metazoa-typ"/>
</dbReference>
<dbReference type="InterPro" id="IPR031919">
    <property type="entry name" value="Fucosidase_C"/>
</dbReference>
<dbReference type="InterPro" id="IPR000933">
    <property type="entry name" value="Glyco_hydro_29"/>
</dbReference>
<dbReference type="InterPro" id="IPR018526">
    <property type="entry name" value="Glyco_hydro_29_CS"/>
</dbReference>
<dbReference type="InterPro" id="IPR013780">
    <property type="entry name" value="Glyco_hydro_b"/>
</dbReference>
<dbReference type="InterPro" id="IPR017853">
    <property type="entry name" value="Glycoside_hydrolase_SF"/>
</dbReference>
<dbReference type="PANTHER" id="PTHR10030">
    <property type="entry name" value="ALPHA-L-FUCOSIDASE"/>
    <property type="match status" value="1"/>
</dbReference>
<dbReference type="PANTHER" id="PTHR10030:SF37">
    <property type="entry name" value="ALPHA-L-FUCOSIDASE-RELATED"/>
    <property type="match status" value="1"/>
</dbReference>
<dbReference type="Pfam" id="PF01120">
    <property type="entry name" value="Alpha_L_fucos"/>
    <property type="match status" value="1"/>
</dbReference>
<dbReference type="Pfam" id="PF16757">
    <property type="entry name" value="Fucosidase_C"/>
    <property type="match status" value="1"/>
</dbReference>
<dbReference type="PIRSF" id="PIRSF001092">
    <property type="entry name" value="Alpha-L-fucosidase"/>
    <property type="match status" value="1"/>
</dbReference>
<dbReference type="PRINTS" id="PR00741">
    <property type="entry name" value="GLHYDRLASE29"/>
</dbReference>
<dbReference type="SMART" id="SM00812">
    <property type="entry name" value="Alpha_L_fucos"/>
    <property type="match status" value="1"/>
</dbReference>
<dbReference type="SUPFAM" id="SSF51445">
    <property type="entry name" value="(Trans)glycosidases"/>
    <property type="match status" value="1"/>
</dbReference>
<dbReference type="PROSITE" id="PS00385">
    <property type="entry name" value="ALPHA_L_FUCOSIDASE"/>
    <property type="match status" value="1"/>
</dbReference>
<feature type="signal peptide" evidence="1">
    <location>
        <begin position="1"/>
        <end position="18"/>
    </location>
</feature>
<feature type="chain" id="PRO_0000010317" description="Alpha-L-fucosidase">
    <location>
        <begin position="19"/>
        <end position="461"/>
    </location>
</feature>
<feature type="site" description="May be important for catalysis">
    <location>
        <position position="288"/>
    </location>
</feature>
<sequence length="461" mass="52647">MKMIIIFFILLILNLIKSQQYGPTWDQINSRPLPGWYDDVKFGIFIHFGIYSVPAFANGGYAEWYWWTLKNPSSDGGATQRYHEKEFGANFTYQDFVSRFDCRLFDANEWASIIEKSGAKYVVLTSKHHEGYTLWNSEQSWNWNSVETGPGIDIVGELTKSVKNMGLHMGLYHSLFEWFNPLYLADAETGKNPTTQVYVDEILMKQLKDIVTTYEPELIWADGDWMQLSNYWKSTEFLSWLYTNSSVKDTVIVNDRWGSECRDKNGGFYTGADHFNPYKLQSHKWENCATIGYSYGYDEYEQATDYQNATELIIDLVTTVACGGNFLLDVGPDAQGTIPNNMVDRLLEIGNWLSINSESIYGSSPWRVQNMTFNIWYTTNTTNGNVYAFVFELPDDGVLILSDPIGNNKTEATLLGLKGEKGVEVSLPIESTKPGITLNIPMVAPQDYPPYVYVFRLTDVE</sequence>
<name>FUCO_DICDI</name>
<protein>
    <recommendedName>
        <fullName>Alpha-L-fucosidase</fullName>
        <ecNumber>3.2.1.51</ecNumber>
    </recommendedName>
    <alternativeName>
        <fullName>Alpha-L-fucoside fucohydrolase</fullName>
    </alternativeName>
</protein>
<organism>
    <name type="scientific">Dictyostelium discoideum</name>
    <name type="common">Social amoeba</name>
    <dbReference type="NCBI Taxonomy" id="44689"/>
    <lineage>
        <taxon>Eukaryota</taxon>
        <taxon>Amoebozoa</taxon>
        <taxon>Evosea</taxon>
        <taxon>Eumycetozoa</taxon>
        <taxon>Dictyostelia</taxon>
        <taxon>Dictyosteliales</taxon>
        <taxon>Dictyosteliaceae</taxon>
        <taxon>Dictyostelium</taxon>
    </lineage>
</organism>